<accession>B6JN68</accession>
<proteinExistence type="inferred from homology"/>
<dbReference type="EC" id="3.6.1.-" evidence="1"/>
<dbReference type="EMBL" id="CP001217">
    <property type="protein sequence ID" value="ACJ08346.1"/>
    <property type="molecule type" value="Genomic_DNA"/>
</dbReference>
<dbReference type="SMR" id="B6JN68"/>
<dbReference type="KEGG" id="hpp:HPP12_1194"/>
<dbReference type="HOGENOM" id="CLU_087195_3_0_7"/>
<dbReference type="Proteomes" id="UP000008198">
    <property type="component" value="Chromosome"/>
</dbReference>
<dbReference type="GO" id="GO:0005737">
    <property type="term" value="C:cytoplasm"/>
    <property type="evidence" value="ECO:0007669"/>
    <property type="project" value="TreeGrafter"/>
</dbReference>
<dbReference type="GO" id="GO:0034353">
    <property type="term" value="F:mRNA 5'-diphosphatase activity"/>
    <property type="evidence" value="ECO:0007669"/>
    <property type="project" value="TreeGrafter"/>
</dbReference>
<dbReference type="GO" id="GO:0006402">
    <property type="term" value="P:mRNA catabolic process"/>
    <property type="evidence" value="ECO:0007669"/>
    <property type="project" value="TreeGrafter"/>
</dbReference>
<dbReference type="CDD" id="cd03671">
    <property type="entry name" value="NUDIX_Ap4A_hydrolase_plant_like"/>
    <property type="match status" value="1"/>
</dbReference>
<dbReference type="FunFam" id="3.90.79.10:FF:000084">
    <property type="entry name" value="RNA pyrophosphohydrolase"/>
    <property type="match status" value="1"/>
</dbReference>
<dbReference type="Gene3D" id="3.90.79.10">
    <property type="entry name" value="Nucleoside Triphosphate Pyrophosphohydrolase"/>
    <property type="match status" value="1"/>
</dbReference>
<dbReference type="HAMAP" id="MF_00298">
    <property type="entry name" value="Nudix_RppH"/>
    <property type="match status" value="1"/>
</dbReference>
<dbReference type="InterPro" id="IPR020476">
    <property type="entry name" value="Nudix_hydrolase"/>
</dbReference>
<dbReference type="InterPro" id="IPR015797">
    <property type="entry name" value="NUDIX_hydrolase-like_dom_sf"/>
</dbReference>
<dbReference type="InterPro" id="IPR020084">
    <property type="entry name" value="NUDIX_hydrolase_CS"/>
</dbReference>
<dbReference type="InterPro" id="IPR000086">
    <property type="entry name" value="NUDIX_hydrolase_dom"/>
</dbReference>
<dbReference type="InterPro" id="IPR022927">
    <property type="entry name" value="RppH"/>
</dbReference>
<dbReference type="NCBIfam" id="NF001936">
    <property type="entry name" value="PRK00714.1-3"/>
    <property type="match status" value="1"/>
</dbReference>
<dbReference type="NCBIfam" id="NF001938">
    <property type="entry name" value="PRK00714.1-5"/>
    <property type="match status" value="1"/>
</dbReference>
<dbReference type="PANTHER" id="PTHR23114">
    <property type="entry name" value="M7GPPPN-MRNA HYDROLASE"/>
    <property type="match status" value="1"/>
</dbReference>
<dbReference type="PANTHER" id="PTHR23114:SF17">
    <property type="entry name" value="M7GPPPN-MRNA HYDROLASE"/>
    <property type="match status" value="1"/>
</dbReference>
<dbReference type="Pfam" id="PF00293">
    <property type="entry name" value="NUDIX"/>
    <property type="match status" value="1"/>
</dbReference>
<dbReference type="PRINTS" id="PR00502">
    <property type="entry name" value="NUDIXFAMILY"/>
</dbReference>
<dbReference type="SUPFAM" id="SSF55811">
    <property type="entry name" value="Nudix"/>
    <property type="match status" value="1"/>
</dbReference>
<dbReference type="PROSITE" id="PS51462">
    <property type="entry name" value="NUDIX"/>
    <property type="match status" value="1"/>
</dbReference>
<dbReference type="PROSITE" id="PS00893">
    <property type="entry name" value="NUDIX_BOX"/>
    <property type="match status" value="1"/>
</dbReference>
<evidence type="ECO:0000255" key="1">
    <source>
        <dbReference type="HAMAP-Rule" id="MF_00298"/>
    </source>
</evidence>
<protein>
    <recommendedName>
        <fullName evidence="1">RNA pyrophosphohydrolase</fullName>
        <ecNumber evidence="1">3.6.1.-</ecNumber>
    </recommendedName>
    <alternativeName>
        <fullName evidence="1">(Di)nucleoside polyphosphate hydrolase</fullName>
    </alternativeName>
</protein>
<comment type="function">
    <text evidence="1">Accelerates the degradation of transcripts by removing pyrophosphate from the 5'-end of triphosphorylated RNA, leading to a more labile monophosphorylated state that can stimulate subsequent ribonuclease cleavage.</text>
</comment>
<comment type="cofactor">
    <cofactor evidence="1">
        <name>a divalent metal cation</name>
        <dbReference type="ChEBI" id="CHEBI:60240"/>
    </cofactor>
</comment>
<comment type="similarity">
    <text evidence="1">Belongs to the Nudix hydrolase family. RppH subfamily.</text>
</comment>
<reference key="1">
    <citation type="submission" date="2008-10" db="EMBL/GenBank/DDBJ databases">
        <title>The complete genome sequence of Helicobacter pylori strain P12.</title>
        <authorList>
            <person name="Fischer W."/>
            <person name="Windhager L."/>
            <person name="Karnholz A."/>
            <person name="Zeiller M."/>
            <person name="Zimmer R."/>
            <person name="Haas R."/>
        </authorList>
    </citation>
    <scope>NUCLEOTIDE SEQUENCE [LARGE SCALE GENOMIC DNA]</scope>
    <source>
        <strain>P12</strain>
    </source>
</reference>
<sequence>MLHKKYRPNVAAIIMSPNYPNACEVFIAERIDIEGAWQFPQGGIDEGETPLEALYRELLEEIGTNEIEILAQYPRWIAYDFPSNMEHKFYAFDGQKQRYFLVRLKHANNIDLNKHTPEFRAYRFIHLKDLLKKIVPFKRQVYRQVIAYFKREGYL</sequence>
<name>RPPH_HELP2</name>
<keyword id="KW-0378">Hydrolase</keyword>
<gene>
    <name evidence="1" type="primary">rppH</name>
    <name evidence="1" type="synonym">nudH</name>
    <name type="ordered locus">HPP12_1194</name>
</gene>
<organism>
    <name type="scientific">Helicobacter pylori (strain P12)</name>
    <dbReference type="NCBI Taxonomy" id="570508"/>
    <lineage>
        <taxon>Bacteria</taxon>
        <taxon>Pseudomonadati</taxon>
        <taxon>Campylobacterota</taxon>
        <taxon>Epsilonproteobacteria</taxon>
        <taxon>Campylobacterales</taxon>
        <taxon>Helicobacteraceae</taxon>
        <taxon>Helicobacter</taxon>
    </lineage>
</organism>
<feature type="chain" id="PRO_1000115280" description="RNA pyrophosphohydrolase">
    <location>
        <begin position="1"/>
        <end position="155"/>
    </location>
</feature>
<feature type="domain" description="Nudix hydrolase" evidence="1">
    <location>
        <begin position="5"/>
        <end position="147"/>
    </location>
</feature>
<feature type="short sequence motif" description="Nudix box">
    <location>
        <begin position="42"/>
        <end position="63"/>
    </location>
</feature>